<gene>
    <name type="primary">yqbD</name>
    <name type="ordered locus">BSU26150</name>
</gene>
<proteinExistence type="evidence at protein level"/>
<sequence>MPRELVNAKITHVSYVDKAANQKQFFIVKSEKQPDFQKEVRILAKEADEQKLVYGIVYEPDTVDAHGDFMTAAEIEKAAHGFLKDARQIDKQHDFQGGVGEVVESYVAPADFEMNGETIKKGSWVLVTKASEEVWEQIKKGEITGYSMAGTAETIEKQEKPVSQEKTDEKGLFNLLKNFFVGKQQQSYEEPVAKAGRKFSASNLQEIKNAHAALGNLLSQVETKEGEEEMTSEEVTKSIQEALEPIKKRLETLEKEEELNKKDKEKEEETEKEGEKLKKAISEAVQPLADRIEAIEKSRGTSKQTEESGSEQVQKSIWSGLF</sequence>
<evidence type="ECO:0000255" key="1"/>
<evidence type="ECO:0000256" key="2">
    <source>
        <dbReference type="SAM" id="MobiDB-lite"/>
    </source>
</evidence>
<evidence type="ECO:0000305" key="3"/>
<dbReference type="EMBL" id="D32216">
    <property type="protein sequence ID" value="BAA06937.1"/>
    <property type="molecule type" value="Genomic_DNA"/>
</dbReference>
<dbReference type="EMBL" id="D84432">
    <property type="protein sequence ID" value="BAA12399.1"/>
    <property type="molecule type" value="Genomic_DNA"/>
</dbReference>
<dbReference type="EMBL" id="AL009126">
    <property type="protein sequence ID" value="CAB14556.2"/>
    <property type="molecule type" value="Genomic_DNA"/>
</dbReference>
<dbReference type="PIR" id="G69946">
    <property type="entry name" value="G69946"/>
</dbReference>
<dbReference type="RefSeq" id="NP_390492.2">
    <property type="nucleotide sequence ID" value="NC_000964.3"/>
</dbReference>
<dbReference type="RefSeq" id="WP_003229921.1">
    <property type="nucleotide sequence ID" value="NZ_OZ025638.1"/>
</dbReference>
<dbReference type="SMR" id="P45920"/>
<dbReference type="FunCoup" id="P45920">
    <property type="interactions" value="29"/>
</dbReference>
<dbReference type="IntAct" id="P45920">
    <property type="interactions" value="32"/>
</dbReference>
<dbReference type="STRING" id="224308.BSU26150"/>
<dbReference type="PaxDb" id="224308-BSU26150"/>
<dbReference type="EnsemblBacteria" id="CAB14556">
    <property type="protein sequence ID" value="CAB14556"/>
    <property type="gene ID" value="BSU_26150"/>
</dbReference>
<dbReference type="GeneID" id="937736"/>
<dbReference type="KEGG" id="bsu:BSU26150"/>
<dbReference type="PATRIC" id="fig|224308.179.peg.2841"/>
<dbReference type="eggNOG" id="COG0338">
    <property type="taxonomic scope" value="Bacteria"/>
</dbReference>
<dbReference type="InParanoid" id="P45920"/>
<dbReference type="OrthoDB" id="2080376at2"/>
<dbReference type="BioCyc" id="BSUB:BSU26150-MONOMER"/>
<dbReference type="Proteomes" id="UP000001570">
    <property type="component" value="Chromosome"/>
</dbReference>
<dbReference type="InterPro" id="IPR027924">
    <property type="entry name" value="XkdF"/>
</dbReference>
<dbReference type="Pfam" id="PF14550">
    <property type="entry name" value="Peptidase_S78_2"/>
    <property type="match status" value="1"/>
</dbReference>
<name>YQBD_BACSU</name>
<organism>
    <name type="scientific">Bacillus subtilis (strain 168)</name>
    <dbReference type="NCBI Taxonomy" id="224308"/>
    <lineage>
        <taxon>Bacteria</taxon>
        <taxon>Bacillati</taxon>
        <taxon>Bacillota</taxon>
        <taxon>Bacilli</taxon>
        <taxon>Bacillales</taxon>
        <taxon>Bacillaceae</taxon>
        <taxon>Bacillus</taxon>
    </lineage>
</organism>
<reference key="1">
    <citation type="journal article" date="1995" name="Microbiology">
        <title>Complete nucleotide sequence of a skin element excised by DNA rearrangement during sporulation in Bacillus subtilis.</title>
        <authorList>
            <person name="Takemaru K."/>
            <person name="Mizuno M."/>
            <person name="Sato T."/>
            <person name="Takeuchi M."/>
            <person name="Kobayashi Y."/>
        </authorList>
    </citation>
    <scope>NUCLEOTIDE SEQUENCE [GENOMIC DNA]</scope>
    <source>
        <strain>168 / JH642</strain>
    </source>
</reference>
<reference key="2">
    <citation type="journal article" date="1996" name="Microbiology">
        <title>Systematic sequencing of the 283 kb 210 degrees-232 degrees region of the Bacillus subtilis genome containing the skin element and many sporulation genes.</title>
        <authorList>
            <person name="Mizuno M."/>
            <person name="Masuda S."/>
            <person name="Takemaru K."/>
            <person name="Hosono S."/>
            <person name="Sato T."/>
            <person name="Takeuchi M."/>
            <person name="Kobayashi Y."/>
        </authorList>
    </citation>
    <scope>NUCLEOTIDE SEQUENCE [GENOMIC DNA]</scope>
    <source>
        <strain>168 / JH642</strain>
    </source>
</reference>
<reference key="3">
    <citation type="journal article" date="1997" name="Nature">
        <title>The complete genome sequence of the Gram-positive bacterium Bacillus subtilis.</title>
        <authorList>
            <person name="Kunst F."/>
            <person name="Ogasawara N."/>
            <person name="Moszer I."/>
            <person name="Albertini A.M."/>
            <person name="Alloni G."/>
            <person name="Azevedo V."/>
            <person name="Bertero M.G."/>
            <person name="Bessieres P."/>
            <person name="Bolotin A."/>
            <person name="Borchert S."/>
            <person name="Borriss R."/>
            <person name="Boursier L."/>
            <person name="Brans A."/>
            <person name="Braun M."/>
            <person name="Brignell S.C."/>
            <person name="Bron S."/>
            <person name="Brouillet S."/>
            <person name="Bruschi C.V."/>
            <person name="Caldwell B."/>
            <person name="Capuano V."/>
            <person name="Carter N.M."/>
            <person name="Choi S.-K."/>
            <person name="Codani J.-J."/>
            <person name="Connerton I.F."/>
            <person name="Cummings N.J."/>
            <person name="Daniel R.A."/>
            <person name="Denizot F."/>
            <person name="Devine K.M."/>
            <person name="Duesterhoeft A."/>
            <person name="Ehrlich S.D."/>
            <person name="Emmerson P.T."/>
            <person name="Entian K.-D."/>
            <person name="Errington J."/>
            <person name="Fabret C."/>
            <person name="Ferrari E."/>
            <person name="Foulger D."/>
            <person name="Fritz C."/>
            <person name="Fujita M."/>
            <person name="Fujita Y."/>
            <person name="Fuma S."/>
            <person name="Galizzi A."/>
            <person name="Galleron N."/>
            <person name="Ghim S.-Y."/>
            <person name="Glaser P."/>
            <person name="Goffeau A."/>
            <person name="Golightly E.J."/>
            <person name="Grandi G."/>
            <person name="Guiseppi G."/>
            <person name="Guy B.J."/>
            <person name="Haga K."/>
            <person name="Haiech J."/>
            <person name="Harwood C.R."/>
            <person name="Henaut A."/>
            <person name="Hilbert H."/>
            <person name="Holsappel S."/>
            <person name="Hosono S."/>
            <person name="Hullo M.-F."/>
            <person name="Itaya M."/>
            <person name="Jones L.-M."/>
            <person name="Joris B."/>
            <person name="Karamata D."/>
            <person name="Kasahara Y."/>
            <person name="Klaerr-Blanchard M."/>
            <person name="Klein C."/>
            <person name="Kobayashi Y."/>
            <person name="Koetter P."/>
            <person name="Koningstein G."/>
            <person name="Krogh S."/>
            <person name="Kumano M."/>
            <person name="Kurita K."/>
            <person name="Lapidus A."/>
            <person name="Lardinois S."/>
            <person name="Lauber J."/>
            <person name="Lazarevic V."/>
            <person name="Lee S.-M."/>
            <person name="Levine A."/>
            <person name="Liu H."/>
            <person name="Masuda S."/>
            <person name="Mauel C."/>
            <person name="Medigue C."/>
            <person name="Medina N."/>
            <person name="Mellado R.P."/>
            <person name="Mizuno M."/>
            <person name="Moestl D."/>
            <person name="Nakai S."/>
            <person name="Noback M."/>
            <person name="Noone D."/>
            <person name="O'Reilly M."/>
            <person name="Ogawa K."/>
            <person name="Ogiwara A."/>
            <person name="Oudega B."/>
            <person name="Park S.-H."/>
            <person name="Parro V."/>
            <person name="Pohl T.M."/>
            <person name="Portetelle D."/>
            <person name="Porwollik S."/>
            <person name="Prescott A.M."/>
            <person name="Presecan E."/>
            <person name="Pujic P."/>
            <person name="Purnelle B."/>
            <person name="Rapoport G."/>
            <person name="Rey M."/>
            <person name="Reynolds S."/>
            <person name="Rieger M."/>
            <person name="Rivolta C."/>
            <person name="Rocha E."/>
            <person name="Roche B."/>
            <person name="Rose M."/>
            <person name="Sadaie Y."/>
            <person name="Sato T."/>
            <person name="Scanlan E."/>
            <person name="Schleich S."/>
            <person name="Schroeter R."/>
            <person name="Scoffone F."/>
            <person name="Sekiguchi J."/>
            <person name="Sekowska A."/>
            <person name="Seror S.J."/>
            <person name="Serror P."/>
            <person name="Shin B.-S."/>
            <person name="Soldo B."/>
            <person name="Sorokin A."/>
            <person name="Tacconi E."/>
            <person name="Takagi T."/>
            <person name="Takahashi H."/>
            <person name="Takemaru K."/>
            <person name="Takeuchi M."/>
            <person name="Tamakoshi A."/>
            <person name="Tanaka T."/>
            <person name="Terpstra P."/>
            <person name="Tognoni A."/>
            <person name="Tosato V."/>
            <person name="Uchiyama S."/>
            <person name="Vandenbol M."/>
            <person name="Vannier F."/>
            <person name="Vassarotti A."/>
            <person name="Viari A."/>
            <person name="Wambutt R."/>
            <person name="Wedler E."/>
            <person name="Wedler H."/>
            <person name="Weitzenegger T."/>
            <person name="Winters P."/>
            <person name="Wipat A."/>
            <person name="Yamamoto H."/>
            <person name="Yamane K."/>
            <person name="Yasumoto K."/>
            <person name="Yata K."/>
            <person name="Yoshida K."/>
            <person name="Yoshikawa H.-F."/>
            <person name="Zumstein E."/>
            <person name="Yoshikawa H."/>
            <person name="Danchin A."/>
        </authorList>
    </citation>
    <scope>NUCLEOTIDE SEQUENCE [LARGE SCALE GENOMIC DNA]</scope>
    <source>
        <strain>168</strain>
    </source>
</reference>
<reference key="4">
    <citation type="journal article" date="2009" name="Microbiology">
        <title>From a consortium sequence to a unified sequence: the Bacillus subtilis 168 reference genome a decade later.</title>
        <authorList>
            <person name="Barbe V."/>
            <person name="Cruveiller S."/>
            <person name="Kunst F."/>
            <person name="Lenoble P."/>
            <person name="Meurice G."/>
            <person name="Sekowska A."/>
            <person name="Vallenet D."/>
            <person name="Wang T."/>
            <person name="Moszer I."/>
            <person name="Medigue C."/>
            <person name="Danchin A."/>
        </authorList>
    </citation>
    <scope>SEQUENCE REVISION TO 59</scope>
</reference>
<reference key="5">
    <citation type="journal article" date="1995" name="Gene">
        <title>Analysis of a Bacillus subtilis genome fragment using a co-operative computer system prototype.</title>
        <authorList>
            <person name="Medigue C."/>
            <person name="Moszer I."/>
            <person name="Viari A."/>
            <person name="Danchin A."/>
        </authorList>
    </citation>
    <scope>IDENTIFICATION</scope>
</reference>
<comment type="interaction">
    <interactant intactId="EBI-5242682">
        <id>P45920</id>
    </interactant>
    <interactant intactId="EBI-5242442">
        <id>O31501</id>
        <label>swrC</label>
    </interactant>
    <organismsDiffer>false</organismsDiffer>
    <experiments>3</experiments>
</comment>
<comment type="interaction">
    <interactant intactId="EBI-5242682">
        <id>P45920</id>
    </interactant>
    <interactant intactId="EBI-5242915">
        <id>P96706</id>
        <label>ydgH</label>
    </interactant>
    <organismsDiffer>false</organismsDiffer>
    <experiments>3</experiments>
</comment>
<comment type="similarity">
    <text evidence="3">To B.subtilis XkdF.</text>
</comment>
<protein>
    <recommendedName>
        <fullName>Uncharacterized protein YqbD</fullName>
    </recommendedName>
</protein>
<keyword id="KW-0175">Coiled coil</keyword>
<keyword id="KW-1185">Reference proteome</keyword>
<accession>P45920</accession>
<feature type="chain" id="PRO_0000049755" description="Uncharacterized protein YqbD">
    <location>
        <begin position="1"/>
        <end position="322"/>
    </location>
</feature>
<feature type="region of interest" description="Disordered" evidence="2">
    <location>
        <begin position="254"/>
        <end position="322"/>
    </location>
</feature>
<feature type="coiled-coil region" evidence="1">
    <location>
        <begin position="205"/>
        <end position="286"/>
    </location>
</feature>
<feature type="compositionally biased region" description="Basic and acidic residues" evidence="2">
    <location>
        <begin position="254"/>
        <end position="281"/>
    </location>
</feature>
<feature type="compositionally biased region" description="Basic and acidic residues" evidence="2">
    <location>
        <begin position="290"/>
        <end position="299"/>
    </location>
</feature>
<feature type="compositionally biased region" description="Polar residues" evidence="2">
    <location>
        <begin position="310"/>
        <end position="322"/>
    </location>
</feature>
<feature type="sequence conflict" description="In Ref. 1; BAA06937 and 2; BAA12399." evidence="3" ref="1 2">
    <original>E</original>
    <variation>D</variation>
    <location>
        <position position="59"/>
    </location>
</feature>